<dbReference type="EC" id="4.2.3.5" evidence="1"/>
<dbReference type="EMBL" id="CP000627">
    <property type="protein sequence ID" value="ABQ21545.1"/>
    <property type="molecule type" value="Genomic_DNA"/>
</dbReference>
<dbReference type="EMBL" id="CP001235">
    <property type="protein sequence ID" value="ACP10222.1"/>
    <property type="molecule type" value="Genomic_DNA"/>
</dbReference>
<dbReference type="RefSeq" id="WP_000918437.1">
    <property type="nucleotide sequence ID" value="NZ_JAACZH010000001.1"/>
</dbReference>
<dbReference type="SMR" id="A5F6F4"/>
<dbReference type="GeneID" id="89513901"/>
<dbReference type="KEGG" id="vco:VC0395_A1699"/>
<dbReference type="KEGG" id="vcr:VC395_2230"/>
<dbReference type="PATRIC" id="fig|345073.21.peg.2154"/>
<dbReference type="eggNOG" id="COG0082">
    <property type="taxonomic scope" value="Bacteria"/>
</dbReference>
<dbReference type="HOGENOM" id="CLU_034547_0_2_6"/>
<dbReference type="OrthoDB" id="9771806at2"/>
<dbReference type="UniPathway" id="UPA00053">
    <property type="reaction ID" value="UER00090"/>
</dbReference>
<dbReference type="Proteomes" id="UP000000249">
    <property type="component" value="Chromosome 2"/>
</dbReference>
<dbReference type="GO" id="GO:0005829">
    <property type="term" value="C:cytosol"/>
    <property type="evidence" value="ECO:0007669"/>
    <property type="project" value="TreeGrafter"/>
</dbReference>
<dbReference type="GO" id="GO:0004107">
    <property type="term" value="F:chorismate synthase activity"/>
    <property type="evidence" value="ECO:0007669"/>
    <property type="project" value="UniProtKB-UniRule"/>
</dbReference>
<dbReference type="GO" id="GO:0010181">
    <property type="term" value="F:FMN binding"/>
    <property type="evidence" value="ECO:0007669"/>
    <property type="project" value="TreeGrafter"/>
</dbReference>
<dbReference type="GO" id="GO:0008652">
    <property type="term" value="P:amino acid biosynthetic process"/>
    <property type="evidence" value="ECO:0007669"/>
    <property type="project" value="UniProtKB-KW"/>
</dbReference>
<dbReference type="GO" id="GO:0009073">
    <property type="term" value="P:aromatic amino acid family biosynthetic process"/>
    <property type="evidence" value="ECO:0007669"/>
    <property type="project" value="UniProtKB-KW"/>
</dbReference>
<dbReference type="GO" id="GO:0009423">
    <property type="term" value="P:chorismate biosynthetic process"/>
    <property type="evidence" value="ECO:0007669"/>
    <property type="project" value="UniProtKB-UniRule"/>
</dbReference>
<dbReference type="CDD" id="cd07304">
    <property type="entry name" value="Chorismate_synthase"/>
    <property type="match status" value="1"/>
</dbReference>
<dbReference type="FunFam" id="3.60.150.10:FF:000001">
    <property type="entry name" value="Chorismate synthase"/>
    <property type="match status" value="1"/>
</dbReference>
<dbReference type="Gene3D" id="3.60.150.10">
    <property type="entry name" value="Chorismate synthase AroC"/>
    <property type="match status" value="1"/>
</dbReference>
<dbReference type="HAMAP" id="MF_00300">
    <property type="entry name" value="Chorismate_synth"/>
    <property type="match status" value="1"/>
</dbReference>
<dbReference type="InterPro" id="IPR000453">
    <property type="entry name" value="Chorismate_synth"/>
</dbReference>
<dbReference type="InterPro" id="IPR035904">
    <property type="entry name" value="Chorismate_synth_AroC_sf"/>
</dbReference>
<dbReference type="InterPro" id="IPR020541">
    <property type="entry name" value="Chorismate_synthase_CS"/>
</dbReference>
<dbReference type="NCBIfam" id="TIGR00033">
    <property type="entry name" value="aroC"/>
    <property type="match status" value="1"/>
</dbReference>
<dbReference type="NCBIfam" id="NF003793">
    <property type="entry name" value="PRK05382.1"/>
    <property type="match status" value="1"/>
</dbReference>
<dbReference type="PANTHER" id="PTHR21085">
    <property type="entry name" value="CHORISMATE SYNTHASE"/>
    <property type="match status" value="1"/>
</dbReference>
<dbReference type="PANTHER" id="PTHR21085:SF0">
    <property type="entry name" value="CHORISMATE SYNTHASE"/>
    <property type="match status" value="1"/>
</dbReference>
<dbReference type="Pfam" id="PF01264">
    <property type="entry name" value="Chorismate_synt"/>
    <property type="match status" value="1"/>
</dbReference>
<dbReference type="PIRSF" id="PIRSF001456">
    <property type="entry name" value="Chorismate_synth"/>
    <property type="match status" value="1"/>
</dbReference>
<dbReference type="SUPFAM" id="SSF103263">
    <property type="entry name" value="Chorismate synthase, AroC"/>
    <property type="match status" value="1"/>
</dbReference>
<dbReference type="PROSITE" id="PS00787">
    <property type="entry name" value="CHORISMATE_SYNTHASE_1"/>
    <property type="match status" value="1"/>
</dbReference>
<dbReference type="PROSITE" id="PS00788">
    <property type="entry name" value="CHORISMATE_SYNTHASE_2"/>
    <property type="match status" value="1"/>
</dbReference>
<dbReference type="PROSITE" id="PS00789">
    <property type="entry name" value="CHORISMATE_SYNTHASE_3"/>
    <property type="match status" value="1"/>
</dbReference>
<organism>
    <name type="scientific">Vibrio cholerae serotype O1 (strain ATCC 39541 / Classical Ogawa 395 / O395)</name>
    <dbReference type="NCBI Taxonomy" id="345073"/>
    <lineage>
        <taxon>Bacteria</taxon>
        <taxon>Pseudomonadati</taxon>
        <taxon>Pseudomonadota</taxon>
        <taxon>Gammaproteobacteria</taxon>
        <taxon>Vibrionales</taxon>
        <taxon>Vibrionaceae</taxon>
        <taxon>Vibrio</taxon>
    </lineage>
</organism>
<proteinExistence type="inferred from homology"/>
<comment type="function">
    <text evidence="1">Catalyzes the anti-1,4-elimination of the C-3 phosphate and the C-6 proR hydrogen from 5-enolpyruvylshikimate-3-phosphate (EPSP) to yield chorismate, which is the branch point compound that serves as the starting substrate for the three terminal pathways of aromatic amino acid biosynthesis. This reaction introduces a second double bond into the aromatic ring system.</text>
</comment>
<comment type="catalytic activity">
    <reaction evidence="1">
        <text>5-O-(1-carboxyvinyl)-3-phosphoshikimate = chorismate + phosphate</text>
        <dbReference type="Rhea" id="RHEA:21020"/>
        <dbReference type="ChEBI" id="CHEBI:29748"/>
        <dbReference type="ChEBI" id="CHEBI:43474"/>
        <dbReference type="ChEBI" id="CHEBI:57701"/>
        <dbReference type="EC" id="4.2.3.5"/>
    </reaction>
</comment>
<comment type="cofactor">
    <cofactor evidence="1">
        <name>FMNH2</name>
        <dbReference type="ChEBI" id="CHEBI:57618"/>
    </cofactor>
    <text evidence="1">Reduced FMN (FMNH(2)).</text>
</comment>
<comment type="pathway">
    <text evidence="1">Metabolic intermediate biosynthesis; chorismate biosynthesis; chorismate from D-erythrose 4-phosphate and phosphoenolpyruvate: step 7/7.</text>
</comment>
<comment type="subunit">
    <text evidence="1">Homotetramer.</text>
</comment>
<comment type="similarity">
    <text evidence="1">Belongs to the chorismate synthase family.</text>
</comment>
<feature type="chain" id="PRO_1000071977" description="Chorismate synthase">
    <location>
        <begin position="1"/>
        <end position="361"/>
    </location>
</feature>
<feature type="binding site" evidence="1">
    <location>
        <position position="48"/>
    </location>
    <ligand>
        <name>NADP(+)</name>
        <dbReference type="ChEBI" id="CHEBI:58349"/>
    </ligand>
</feature>
<feature type="binding site" evidence="1">
    <location>
        <position position="54"/>
    </location>
    <ligand>
        <name>NADP(+)</name>
        <dbReference type="ChEBI" id="CHEBI:58349"/>
    </ligand>
</feature>
<feature type="binding site" evidence="1">
    <location>
        <begin position="125"/>
        <end position="127"/>
    </location>
    <ligand>
        <name>FMN</name>
        <dbReference type="ChEBI" id="CHEBI:58210"/>
    </ligand>
</feature>
<feature type="binding site" evidence="1">
    <location>
        <begin position="238"/>
        <end position="239"/>
    </location>
    <ligand>
        <name>FMN</name>
        <dbReference type="ChEBI" id="CHEBI:58210"/>
    </ligand>
</feature>
<feature type="binding site" evidence="1">
    <location>
        <position position="278"/>
    </location>
    <ligand>
        <name>FMN</name>
        <dbReference type="ChEBI" id="CHEBI:58210"/>
    </ligand>
</feature>
<feature type="binding site" evidence="1">
    <location>
        <begin position="293"/>
        <end position="297"/>
    </location>
    <ligand>
        <name>FMN</name>
        <dbReference type="ChEBI" id="CHEBI:58210"/>
    </ligand>
</feature>
<feature type="binding site" evidence="1">
    <location>
        <position position="319"/>
    </location>
    <ligand>
        <name>FMN</name>
        <dbReference type="ChEBI" id="CHEBI:58210"/>
    </ligand>
</feature>
<name>AROC_VIBC3</name>
<protein>
    <recommendedName>
        <fullName evidence="1">Chorismate synthase</fullName>
        <shortName evidence="1">CS</shortName>
        <ecNumber evidence="1">4.2.3.5</ecNumber>
    </recommendedName>
    <alternativeName>
        <fullName evidence="1">5-enolpyruvylshikimate-3-phosphate phospholyase</fullName>
    </alternativeName>
</protein>
<keyword id="KW-0028">Amino-acid biosynthesis</keyword>
<keyword id="KW-0057">Aromatic amino acid biosynthesis</keyword>
<keyword id="KW-0274">FAD</keyword>
<keyword id="KW-0285">Flavoprotein</keyword>
<keyword id="KW-0288">FMN</keyword>
<keyword id="KW-0456">Lyase</keyword>
<keyword id="KW-0521">NADP</keyword>
<gene>
    <name evidence="1" type="primary">aroC</name>
    <name type="ordered locus">VC0395_A1699</name>
    <name type="ordered locus">VC395_2230</name>
</gene>
<reference key="1">
    <citation type="submission" date="2007-03" db="EMBL/GenBank/DDBJ databases">
        <authorList>
            <person name="Heidelberg J."/>
        </authorList>
    </citation>
    <scope>NUCLEOTIDE SEQUENCE [LARGE SCALE GENOMIC DNA]</scope>
    <source>
        <strain>ATCC 39541 / Classical Ogawa 395 / O395</strain>
    </source>
</reference>
<reference key="2">
    <citation type="journal article" date="2008" name="PLoS ONE">
        <title>A recalibrated molecular clock and independent origins for the cholera pandemic clones.</title>
        <authorList>
            <person name="Feng L."/>
            <person name="Reeves P.R."/>
            <person name="Lan R."/>
            <person name="Ren Y."/>
            <person name="Gao C."/>
            <person name="Zhou Z."/>
            <person name="Ren Y."/>
            <person name="Cheng J."/>
            <person name="Wang W."/>
            <person name="Wang J."/>
            <person name="Qian W."/>
            <person name="Li D."/>
            <person name="Wang L."/>
        </authorList>
    </citation>
    <scope>NUCLEOTIDE SEQUENCE [LARGE SCALE GENOMIC DNA]</scope>
    <source>
        <strain>ATCC 39541 / Classical Ogawa 395 / O395</strain>
    </source>
</reference>
<evidence type="ECO:0000255" key="1">
    <source>
        <dbReference type="HAMAP-Rule" id="MF_00300"/>
    </source>
</evidence>
<accession>A5F6F4</accession>
<accession>C3M2U8</accession>
<sequence>MAGNSIGQHFRVTTFGESHGIALGCIVDGCPPGLTISEADLQVDLDRRRPGTSRYTTQRREPDEVKILSGVFEGKTTGTSIGLLIENTDQRSKDYSDIKDKFRPGHADYTYHQKYGVRDYRGGGRSSARETAMRVAAGAIAKKYLQQEFGIEVRAYLSQMGEVAIDKVDWNEIENNDFFCPDVDKVAAFDELIRELKKEGDSIGAKIQVVATGVPVGLGEPVFDRLDADIAHALMSINAVKGVEIGDGFDVVRQKGSQHRDPLTPQGFRSNHSGGILGGISSGQDIVANIALKPTSSITVPGETIDVNGEPTELITKGRHDPCVGIRAVPIAEAMLAIVLMDHLLRHRGQNQGVVTTTPKI</sequence>